<dbReference type="EMBL" id="CP000828">
    <property type="protein sequence ID" value="ABW25668.1"/>
    <property type="molecule type" value="Genomic_DNA"/>
</dbReference>
<dbReference type="RefSeq" id="WP_010470985.1">
    <property type="nucleotide sequence ID" value="NC_009925.1"/>
</dbReference>
<dbReference type="SMR" id="B0CD77"/>
<dbReference type="STRING" id="329726.AM1_0619"/>
<dbReference type="KEGG" id="amr:AM1_0619"/>
<dbReference type="eggNOG" id="COG0290">
    <property type="taxonomic scope" value="Bacteria"/>
</dbReference>
<dbReference type="HOGENOM" id="CLU_054919_3_2_3"/>
<dbReference type="OrthoDB" id="9806014at2"/>
<dbReference type="Proteomes" id="UP000000268">
    <property type="component" value="Chromosome"/>
</dbReference>
<dbReference type="GO" id="GO:0005829">
    <property type="term" value="C:cytosol"/>
    <property type="evidence" value="ECO:0007669"/>
    <property type="project" value="TreeGrafter"/>
</dbReference>
<dbReference type="GO" id="GO:0016020">
    <property type="term" value="C:membrane"/>
    <property type="evidence" value="ECO:0007669"/>
    <property type="project" value="TreeGrafter"/>
</dbReference>
<dbReference type="GO" id="GO:0043022">
    <property type="term" value="F:ribosome binding"/>
    <property type="evidence" value="ECO:0007669"/>
    <property type="project" value="TreeGrafter"/>
</dbReference>
<dbReference type="GO" id="GO:0003743">
    <property type="term" value="F:translation initiation factor activity"/>
    <property type="evidence" value="ECO:0007669"/>
    <property type="project" value="UniProtKB-UniRule"/>
</dbReference>
<dbReference type="GO" id="GO:0032790">
    <property type="term" value="P:ribosome disassembly"/>
    <property type="evidence" value="ECO:0007669"/>
    <property type="project" value="TreeGrafter"/>
</dbReference>
<dbReference type="FunFam" id="3.10.20.80:FF:000001">
    <property type="entry name" value="Translation initiation factor IF-3"/>
    <property type="match status" value="1"/>
</dbReference>
<dbReference type="FunFam" id="3.30.110.10:FF:000001">
    <property type="entry name" value="Translation initiation factor IF-3"/>
    <property type="match status" value="1"/>
</dbReference>
<dbReference type="Gene3D" id="3.30.110.10">
    <property type="entry name" value="Translation initiation factor 3 (IF-3), C-terminal domain"/>
    <property type="match status" value="1"/>
</dbReference>
<dbReference type="Gene3D" id="3.10.20.80">
    <property type="entry name" value="Translation initiation factor 3 (IF-3), N-terminal domain"/>
    <property type="match status" value="1"/>
</dbReference>
<dbReference type="HAMAP" id="MF_00080">
    <property type="entry name" value="IF_3"/>
    <property type="match status" value="1"/>
</dbReference>
<dbReference type="InterPro" id="IPR036788">
    <property type="entry name" value="T_IF-3_C_sf"/>
</dbReference>
<dbReference type="InterPro" id="IPR036787">
    <property type="entry name" value="T_IF-3_N_sf"/>
</dbReference>
<dbReference type="InterPro" id="IPR019813">
    <property type="entry name" value="Translation_initiation_fac3_CS"/>
</dbReference>
<dbReference type="InterPro" id="IPR001288">
    <property type="entry name" value="Translation_initiation_fac_3"/>
</dbReference>
<dbReference type="InterPro" id="IPR019815">
    <property type="entry name" value="Translation_initiation_fac_3_C"/>
</dbReference>
<dbReference type="InterPro" id="IPR019814">
    <property type="entry name" value="Translation_initiation_fac_3_N"/>
</dbReference>
<dbReference type="NCBIfam" id="TIGR00168">
    <property type="entry name" value="infC"/>
    <property type="match status" value="1"/>
</dbReference>
<dbReference type="PANTHER" id="PTHR10938">
    <property type="entry name" value="TRANSLATION INITIATION FACTOR IF-3"/>
    <property type="match status" value="1"/>
</dbReference>
<dbReference type="PANTHER" id="PTHR10938:SF0">
    <property type="entry name" value="TRANSLATION INITIATION FACTOR IF-3, MITOCHONDRIAL"/>
    <property type="match status" value="1"/>
</dbReference>
<dbReference type="Pfam" id="PF00707">
    <property type="entry name" value="IF3_C"/>
    <property type="match status" value="1"/>
</dbReference>
<dbReference type="Pfam" id="PF05198">
    <property type="entry name" value="IF3_N"/>
    <property type="match status" value="1"/>
</dbReference>
<dbReference type="SUPFAM" id="SSF55200">
    <property type="entry name" value="Translation initiation factor IF3, C-terminal domain"/>
    <property type="match status" value="1"/>
</dbReference>
<dbReference type="SUPFAM" id="SSF54364">
    <property type="entry name" value="Translation initiation factor IF3, N-terminal domain"/>
    <property type="match status" value="1"/>
</dbReference>
<dbReference type="PROSITE" id="PS00938">
    <property type="entry name" value="IF3"/>
    <property type="match status" value="1"/>
</dbReference>
<comment type="function">
    <text evidence="1">IF-3 binds to the 30S ribosomal subunit and shifts the equilibrium between 70S ribosomes and their 50S and 30S subunits in favor of the free subunits, thus enhancing the availability of 30S subunits on which protein synthesis initiation begins.</text>
</comment>
<comment type="subunit">
    <text evidence="1">Monomer.</text>
</comment>
<comment type="subcellular location">
    <subcellularLocation>
        <location evidence="1">Cytoplasm</location>
    </subcellularLocation>
</comment>
<comment type="similarity">
    <text evidence="1">Belongs to the IF-3 family.</text>
</comment>
<organism>
    <name type="scientific">Acaryochloris marina (strain MBIC 11017)</name>
    <dbReference type="NCBI Taxonomy" id="329726"/>
    <lineage>
        <taxon>Bacteria</taxon>
        <taxon>Bacillati</taxon>
        <taxon>Cyanobacteriota</taxon>
        <taxon>Cyanophyceae</taxon>
        <taxon>Acaryochloridales</taxon>
        <taxon>Acaryochloridaceae</taxon>
        <taxon>Acaryochloris</taxon>
    </lineage>
</organism>
<protein>
    <recommendedName>
        <fullName evidence="1">Translation initiation factor IF-3</fullName>
    </recommendedName>
</protein>
<gene>
    <name evidence="1" type="primary">infC</name>
    <name type="ordered locus">AM1_0619</name>
</gene>
<feature type="chain" id="PRO_1000117097" description="Translation initiation factor IF-3">
    <location>
        <begin position="1"/>
        <end position="177"/>
    </location>
</feature>
<reference key="1">
    <citation type="journal article" date="2008" name="Proc. Natl. Acad. Sci. U.S.A.">
        <title>Niche adaptation and genome expansion in the chlorophyll d-producing cyanobacterium Acaryochloris marina.</title>
        <authorList>
            <person name="Swingley W.D."/>
            <person name="Chen M."/>
            <person name="Cheung P.C."/>
            <person name="Conrad A.L."/>
            <person name="Dejesa L.C."/>
            <person name="Hao J."/>
            <person name="Honchak B.M."/>
            <person name="Karbach L.E."/>
            <person name="Kurdoglu A."/>
            <person name="Lahiri S."/>
            <person name="Mastrian S.D."/>
            <person name="Miyashita H."/>
            <person name="Page L."/>
            <person name="Ramakrishna P."/>
            <person name="Satoh S."/>
            <person name="Sattley W.M."/>
            <person name="Shimada Y."/>
            <person name="Taylor H.L."/>
            <person name="Tomo T."/>
            <person name="Tsuchiya T."/>
            <person name="Wang Z.T."/>
            <person name="Raymond J."/>
            <person name="Mimuro M."/>
            <person name="Blankenship R.E."/>
            <person name="Touchman J.W."/>
        </authorList>
    </citation>
    <scope>NUCLEOTIDE SEQUENCE [LARGE SCALE GENOMIC DNA]</scope>
    <source>
        <strain>MBIC 11017</strain>
    </source>
</reference>
<sequence length="177" mass="20560">MAPIKKRNQQNQPNINERIRFPKIRVVDADGTQLGIMAPSEAMEIADERNLDLVLVSDKADPPVCRVMDYGKFKFEQEKKAREAKKKQHTSDVKEVKMRYKIQTHDYEVRVNHAKRFLKSGDKVKATVTFRGREIQHSHLAEALLKKMANDLLDFAEIQQAPKREGRNMIMYLSPKK</sequence>
<evidence type="ECO:0000255" key="1">
    <source>
        <dbReference type="HAMAP-Rule" id="MF_00080"/>
    </source>
</evidence>
<proteinExistence type="inferred from homology"/>
<name>IF3_ACAM1</name>
<accession>B0CD77</accession>
<keyword id="KW-0963">Cytoplasm</keyword>
<keyword id="KW-0396">Initiation factor</keyword>
<keyword id="KW-0648">Protein biosynthesis</keyword>
<keyword id="KW-1185">Reference proteome</keyword>